<name>COP_CLOPF</name>
<proteinExistence type="predicted"/>
<sequence>MIISKDTKDLIFSILTILFVILCLNLIVFFSYNKAVEVNQSIFLMMLLLNLSFIIISLLYLLFLKKLVKFPALLNLFLGILFSFSSLQDLIISLNMFYQILSFSKFIYIFIIFIIIYILFLSFFLTAIKKKLKNKNTYSKPINKTIFIIAALIGIVFSKINFNIPQYYIISFLMYVFSCIFTFGFYHIYIYINSVKNN</sequence>
<gene>
    <name type="primary">cop</name>
</gene>
<protein>
    <recommendedName>
        <fullName>Copy number protein</fullName>
    </recommendedName>
    <alternativeName>
        <fullName>ORF4</fullName>
    </alternativeName>
</protein>
<geneLocation type="plasmid">
    <name>pIP404</name>
</geneLocation>
<reference key="1">
    <citation type="journal article" date="1988" name="Plasmid">
        <title>Complete nucleotide sequence and genetic organization of the bacteriocinogenic plasmid, pIP404, from Clostridium perfringens.</title>
        <authorList>
            <person name="Garnier T."/>
            <person name="Cole S.T."/>
        </authorList>
    </citation>
    <scope>NUCLEOTIDE SEQUENCE [GENOMIC DNA]</scope>
    <source>
        <strain>CPN50</strain>
    </source>
</reference>
<comment type="function">
    <text>Involved in copy number control of pIP404. This basic and hydrophobic protein may exert its effect from the cytoplasmic membrane.</text>
</comment>
<comment type="subcellular location">
    <subcellularLocation>
        <location evidence="1">Cell membrane</location>
    </subcellularLocation>
</comment>
<organism>
    <name type="scientific">Clostridium perfringens</name>
    <dbReference type="NCBI Taxonomy" id="1502"/>
    <lineage>
        <taxon>Bacteria</taxon>
        <taxon>Bacillati</taxon>
        <taxon>Bacillota</taxon>
        <taxon>Clostridia</taxon>
        <taxon>Eubacteriales</taxon>
        <taxon>Clostridiaceae</taxon>
        <taxon>Clostridium</taxon>
    </lineage>
</organism>
<evidence type="ECO:0000305" key="1"/>
<keyword id="KW-1003">Cell membrane</keyword>
<keyword id="KW-0472">Membrane</keyword>
<keyword id="KW-0614">Plasmid</keyword>
<keyword id="KW-0615">Plasmid copy control</keyword>
<accession>P18015</accession>
<dbReference type="EMBL" id="M32882">
    <property type="protein sequence ID" value="AAA98250.1"/>
    <property type="molecule type" value="Genomic_DNA"/>
</dbReference>
<dbReference type="PIR" id="JT0356">
    <property type="entry name" value="JT0356"/>
</dbReference>
<dbReference type="RefSeq" id="NP_040452.1">
    <property type="nucleotide sequence ID" value="NC_001388.1"/>
</dbReference>
<dbReference type="RefSeq" id="WP_010889924.1">
    <property type="nucleotide sequence ID" value="NC_001388.1"/>
</dbReference>
<dbReference type="SMR" id="P18015"/>
<dbReference type="GO" id="GO:0005886">
    <property type="term" value="C:plasma membrane"/>
    <property type="evidence" value="ECO:0007669"/>
    <property type="project" value="UniProtKB-SubCell"/>
</dbReference>
<dbReference type="GO" id="GO:0006276">
    <property type="term" value="P:plasmid maintenance"/>
    <property type="evidence" value="ECO:0007669"/>
    <property type="project" value="UniProtKB-KW"/>
</dbReference>
<feature type="chain" id="PRO_0000079249" description="Copy number protein">
    <location>
        <begin position="1"/>
        <end position="198"/>
    </location>
</feature>